<sequence>MKRSSQDSGSRSIPEDRKLYVVDSINDLNKLNLCPAGSQQLFPLEEKLQDISTDSGNGSRSLFLVGLIIVLIISLALVSFVIFLIVQTENKMEDVSRRLAAEGKDIDDLKKINSIIVKRLNQLDSEQS</sequence>
<name>LSME1_BOVIN</name>
<keyword id="KW-0175">Coiled coil</keyword>
<keyword id="KW-0472">Membrane</keyword>
<keyword id="KW-0597">Phosphoprotein</keyword>
<keyword id="KW-1185">Reference proteome</keyword>
<keyword id="KW-0812">Transmembrane</keyword>
<keyword id="KW-1133">Transmembrane helix</keyword>
<feature type="chain" id="PRO_0000309271" description="Leucine-rich single-pass membrane protein 1">
    <location>
        <begin position="1"/>
        <end position="128"/>
    </location>
</feature>
<feature type="transmembrane region" description="Helical" evidence="2">
    <location>
        <begin position="65"/>
        <end position="85"/>
    </location>
</feature>
<feature type="coiled-coil region" evidence="2">
    <location>
        <begin position="87"/>
        <end position="111"/>
    </location>
</feature>
<feature type="modified residue" description="Phosphoserine" evidence="1">
    <location>
        <position position="24"/>
    </location>
</feature>
<organism>
    <name type="scientific">Bos taurus</name>
    <name type="common">Bovine</name>
    <dbReference type="NCBI Taxonomy" id="9913"/>
    <lineage>
        <taxon>Eukaryota</taxon>
        <taxon>Metazoa</taxon>
        <taxon>Chordata</taxon>
        <taxon>Craniata</taxon>
        <taxon>Vertebrata</taxon>
        <taxon>Euteleostomi</taxon>
        <taxon>Mammalia</taxon>
        <taxon>Eutheria</taxon>
        <taxon>Laurasiatheria</taxon>
        <taxon>Artiodactyla</taxon>
        <taxon>Ruminantia</taxon>
        <taxon>Pecora</taxon>
        <taxon>Bovidae</taxon>
        <taxon>Bovinae</taxon>
        <taxon>Bos</taxon>
    </lineage>
</organism>
<evidence type="ECO:0000250" key="1">
    <source>
        <dbReference type="UniProtKB" id="Q3UQS2"/>
    </source>
</evidence>
<evidence type="ECO:0000255" key="2"/>
<evidence type="ECO:0000305" key="3"/>
<proteinExistence type="evidence at transcript level"/>
<protein>
    <recommendedName>
        <fullName>Leucine-rich single-pass membrane protein 1</fullName>
    </recommendedName>
</protein>
<dbReference type="EMBL" id="BC142316">
    <property type="protein sequence ID" value="AAI42317.1"/>
    <property type="molecule type" value="mRNA"/>
</dbReference>
<dbReference type="RefSeq" id="NP_001093188.1">
    <property type="nucleotide sequence ID" value="NM_001099718.2"/>
</dbReference>
<dbReference type="SMR" id="A5PK14"/>
<dbReference type="FunCoup" id="A5PK14">
    <property type="interactions" value="12"/>
</dbReference>
<dbReference type="STRING" id="9913.ENSBTAP00000013956"/>
<dbReference type="PaxDb" id="9913-ENSBTAP00000013956"/>
<dbReference type="GeneID" id="613798"/>
<dbReference type="KEGG" id="bta:613798"/>
<dbReference type="CTD" id="286006"/>
<dbReference type="eggNOG" id="ENOG502SU77">
    <property type="taxonomic scope" value="Eukaryota"/>
</dbReference>
<dbReference type="InParanoid" id="A5PK14"/>
<dbReference type="OrthoDB" id="9942858at2759"/>
<dbReference type="Proteomes" id="UP000009136">
    <property type="component" value="Unplaced"/>
</dbReference>
<dbReference type="GO" id="GO:0016020">
    <property type="term" value="C:membrane"/>
    <property type="evidence" value="ECO:0007669"/>
    <property type="project" value="UniProtKB-SubCell"/>
</dbReference>
<dbReference type="InterPro" id="IPR028099">
    <property type="entry name" value="DUF4577"/>
</dbReference>
<dbReference type="PANTHER" id="PTHR36475">
    <property type="entry name" value="LEUCINE-RICH SINGLE-PASS MEMBRANE PROTEIN 1"/>
    <property type="match status" value="1"/>
</dbReference>
<dbReference type="PANTHER" id="PTHR36475:SF1">
    <property type="entry name" value="LEUCINE-RICH SINGLE-PASS MEMBRANE PROTEIN 1"/>
    <property type="match status" value="1"/>
</dbReference>
<dbReference type="Pfam" id="PF15145">
    <property type="entry name" value="DUF4577"/>
    <property type="match status" value="1"/>
</dbReference>
<reference key="1">
    <citation type="submission" date="2007-06" db="EMBL/GenBank/DDBJ databases">
        <authorList>
            <consortium name="NIH - Mammalian Gene Collection (MGC) project"/>
        </authorList>
    </citation>
    <scope>NUCLEOTIDE SEQUENCE [LARGE SCALE MRNA]</scope>
    <source>
        <strain>Hereford</strain>
        <tissue>Thymus</tissue>
    </source>
</reference>
<gene>
    <name type="primary">LSMEM1</name>
</gene>
<accession>A5PK14</accession>
<comment type="subcellular location">
    <subcellularLocation>
        <location evidence="3">Membrane</location>
        <topology evidence="3">Single-pass membrane protein</topology>
    </subcellularLocation>
</comment>